<protein>
    <recommendedName>
        <fullName evidence="1">Ribonuclease PH</fullName>
        <shortName evidence="1">RNase PH</shortName>
        <ecNumber evidence="1">2.7.7.56</ecNumber>
    </recommendedName>
    <alternativeName>
        <fullName evidence="1">tRNA nucleotidyltransferase</fullName>
    </alternativeName>
</protein>
<name>RNPH_ECO24</name>
<keyword id="KW-0548">Nucleotidyltransferase</keyword>
<keyword id="KW-1185">Reference proteome</keyword>
<keyword id="KW-0694">RNA-binding</keyword>
<keyword id="KW-0698">rRNA processing</keyword>
<keyword id="KW-0808">Transferase</keyword>
<keyword id="KW-0819">tRNA processing</keyword>
<keyword id="KW-0820">tRNA-binding</keyword>
<proteinExistence type="inferred from homology"/>
<dbReference type="EC" id="2.7.7.56" evidence="1"/>
<dbReference type="EMBL" id="CP000800">
    <property type="protein sequence ID" value="ABV20244.1"/>
    <property type="molecule type" value="Genomic_DNA"/>
</dbReference>
<dbReference type="RefSeq" id="WP_001247093.1">
    <property type="nucleotide sequence ID" value="NC_009801.1"/>
</dbReference>
<dbReference type="SMR" id="A7ZTJ4"/>
<dbReference type="GeneID" id="93778358"/>
<dbReference type="KEGG" id="ecw:EcE24377A_4144"/>
<dbReference type="HOGENOM" id="CLU_050858_0_0_6"/>
<dbReference type="Proteomes" id="UP000001122">
    <property type="component" value="Chromosome"/>
</dbReference>
<dbReference type="GO" id="GO:0000175">
    <property type="term" value="F:3'-5'-RNA exonuclease activity"/>
    <property type="evidence" value="ECO:0007669"/>
    <property type="project" value="UniProtKB-UniRule"/>
</dbReference>
<dbReference type="GO" id="GO:0000049">
    <property type="term" value="F:tRNA binding"/>
    <property type="evidence" value="ECO:0007669"/>
    <property type="project" value="UniProtKB-UniRule"/>
</dbReference>
<dbReference type="GO" id="GO:0009022">
    <property type="term" value="F:tRNA nucleotidyltransferase activity"/>
    <property type="evidence" value="ECO:0007669"/>
    <property type="project" value="UniProtKB-UniRule"/>
</dbReference>
<dbReference type="GO" id="GO:0016075">
    <property type="term" value="P:rRNA catabolic process"/>
    <property type="evidence" value="ECO:0007669"/>
    <property type="project" value="UniProtKB-UniRule"/>
</dbReference>
<dbReference type="GO" id="GO:0006364">
    <property type="term" value="P:rRNA processing"/>
    <property type="evidence" value="ECO:0007669"/>
    <property type="project" value="UniProtKB-KW"/>
</dbReference>
<dbReference type="GO" id="GO:0008033">
    <property type="term" value="P:tRNA processing"/>
    <property type="evidence" value="ECO:0007669"/>
    <property type="project" value="UniProtKB-UniRule"/>
</dbReference>
<dbReference type="CDD" id="cd11362">
    <property type="entry name" value="RNase_PH_bact"/>
    <property type="match status" value="1"/>
</dbReference>
<dbReference type="FunFam" id="3.30.230.70:FF:000003">
    <property type="entry name" value="Ribonuclease PH"/>
    <property type="match status" value="1"/>
</dbReference>
<dbReference type="Gene3D" id="3.30.230.70">
    <property type="entry name" value="GHMP Kinase, N-terminal domain"/>
    <property type="match status" value="1"/>
</dbReference>
<dbReference type="HAMAP" id="MF_00564">
    <property type="entry name" value="RNase_PH"/>
    <property type="match status" value="1"/>
</dbReference>
<dbReference type="InterPro" id="IPR001247">
    <property type="entry name" value="ExoRNase_PH_dom1"/>
</dbReference>
<dbReference type="InterPro" id="IPR015847">
    <property type="entry name" value="ExoRNase_PH_dom2"/>
</dbReference>
<dbReference type="InterPro" id="IPR036345">
    <property type="entry name" value="ExoRNase_PH_dom2_sf"/>
</dbReference>
<dbReference type="InterPro" id="IPR027408">
    <property type="entry name" value="PNPase/RNase_PH_dom_sf"/>
</dbReference>
<dbReference type="InterPro" id="IPR020568">
    <property type="entry name" value="Ribosomal_Su5_D2-typ_SF"/>
</dbReference>
<dbReference type="InterPro" id="IPR050080">
    <property type="entry name" value="RNase_PH"/>
</dbReference>
<dbReference type="InterPro" id="IPR002381">
    <property type="entry name" value="RNase_PH_bac-type"/>
</dbReference>
<dbReference type="InterPro" id="IPR018336">
    <property type="entry name" value="RNase_PH_CS"/>
</dbReference>
<dbReference type="NCBIfam" id="TIGR01966">
    <property type="entry name" value="RNasePH"/>
    <property type="match status" value="1"/>
</dbReference>
<dbReference type="PANTHER" id="PTHR11953">
    <property type="entry name" value="EXOSOME COMPLEX COMPONENT"/>
    <property type="match status" value="1"/>
</dbReference>
<dbReference type="PANTHER" id="PTHR11953:SF0">
    <property type="entry name" value="EXOSOME COMPLEX COMPONENT RRP41"/>
    <property type="match status" value="1"/>
</dbReference>
<dbReference type="Pfam" id="PF01138">
    <property type="entry name" value="RNase_PH"/>
    <property type="match status" value="1"/>
</dbReference>
<dbReference type="Pfam" id="PF03725">
    <property type="entry name" value="RNase_PH_C"/>
    <property type="match status" value="1"/>
</dbReference>
<dbReference type="SUPFAM" id="SSF55666">
    <property type="entry name" value="Ribonuclease PH domain 2-like"/>
    <property type="match status" value="1"/>
</dbReference>
<dbReference type="SUPFAM" id="SSF54211">
    <property type="entry name" value="Ribosomal protein S5 domain 2-like"/>
    <property type="match status" value="1"/>
</dbReference>
<dbReference type="PROSITE" id="PS01277">
    <property type="entry name" value="RIBONUCLEASE_PH"/>
    <property type="match status" value="1"/>
</dbReference>
<accession>A7ZTJ4</accession>
<gene>
    <name evidence="1" type="primary">rph</name>
    <name type="ordered locus">EcE24377A_4144</name>
</gene>
<sequence>MRPAGRSNNQVRPVTLTRNYTKHAEGSVLVEFGDTKVLCTASIEEGVPRFLKGQGQGWITAEYGMLPRSTHTRNAREAAKGKQGGRTMEIQRLIARALRAAVDLKALGEFTITLDCDVLQADGGTRTASITGACVALADALQKLVENGKLKTNPMKGMVAAVSVGIVNGEAVCDLEYVEDSAAETDMNVVMTEDGRIIEVQGTAEGEPFTHEELLTLLALARGGIESIVATQKAALAN</sequence>
<reference key="1">
    <citation type="journal article" date="2008" name="J. Bacteriol.">
        <title>The pangenome structure of Escherichia coli: comparative genomic analysis of E. coli commensal and pathogenic isolates.</title>
        <authorList>
            <person name="Rasko D.A."/>
            <person name="Rosovitz M.J."/>
            <person name="Myers G.S.A."/>
            <person name="Mongodin E.F."/>
            <person name="Fricke W.F."/>
            <person name="Gajer P."/>
            <person name="Crabtree J."/>
            <person name="Sebaihia M."/>
            <person name="Thomson N.R."/>
            <person name="Chaudhuri R."/>
            <person name="Henderson I.R."/>
            <person name="Sperandio V."/>
            <person name="Ravel J."/>
        </authorList>
    </citation>
    <scope>NUCLEOTIDE SEQUENCE [LARGE SCALE GENOMIC DNA]</scope>
    <source>
        <strain>E24377A / ETEC</strain>
    </source>
</reference>
<feature type="chain" id="PRO_1000061133" description="Ribonuclease PH">
    <location>
        <begin position="1"/>
        <end position="238"/>
    </location>
</feature>
<feature type="binding site" evidence="1">
    <location>
        <position position="86"/>
    </location>
    <ligand>
        <name>phosphate</name>
        <dbReference type="ChEBI" id="CHEBI:43474"/>
        <note>substrate</note>
    </ligand>
</feature>
<feature type="binding site" evidence="1">
    <location>
        <begin position="124"/>
        <end position="126"/>
    </location>
    <ligand>
        <name>phosphate</name>
        <dbReference type="ChEBI" id="CHEBI:43474"/>
        <note>substrate</note>
    </ligand>
</feature>
<organism>
    <name type="scientific">Escherichia coli O139:H28 (strain E24377A / ETEC)</name>
    <dbReference type="NCBI Taxonomy" id="331111"/>
    <lineage>
        <taxon>Bacteria</taxon>
        <taxon>Pseudomonadati</taxon>
        <taxon>Pseudomonadota</taxon>
        <taxon>Gammaproteobacteria</taxon>
        <taxon>Enterobacterales</taxon>
        <taxon>Enterobacteriaceae</taxon>
        <taxon>Escherichia</taxon>
    </lineage>
</organism>
<comment type="function">
    <text evidence="1">Phosphorolytic 3'-5' exoribonuclease that plays an important role in tRNA 3'-end maturation. Removes nucleotide residues following the 3'-CCA terminus of tRNAs; can also add nucleotides to the ends of RNA molecules by using nucleoside diphosphates as substrates, but this may not be physiologically important. Probably plays a role in initiation of 16S rRNA degradation (leading to ribosome degradation) during starvation.</text>
</comment>
<comment type="catalytic activity">
    <reaction evidence="1">
        <text>tRNA(n+1) + phosphate = tRNA(n) + a ribonucleoside 5'-diphosphate</text>
        <dbReference type="Rhea" id="RHEA:10628"/>
        <dbReference type="Rhea" id="RHEA-COMP:17343"/>
        <dbReference type="Rhea" id="RHEA-COMP:17344"/>
        <dbReference type="ChEBI" id="CHEBI:43474"/>
        <dbReference type="ChEBI" id="CHEBI:57930"/>
        <dbReference type="ChEBI" id="CHEBI:173114"/>
        <dbReference type="EC" id="2.7.7.56"/>
    </reaction>
</comment>
<comment type="subunit">
    <text evidence="1">Homohexameric ring arranged as a trimer of dimers.</text>
</comment>
<comment type="similarity">
    <text evidence="1">Belongs to the RNase PH family.</text>
</comment>
<evidence type="ECO:0000255" key="1">
    <source>
        <dbReference type="HAMAP-Rule" id="MF_00564"/>
    </source>
</evidence>